<proteinExistence type="inferred from homology"/>
<keyword id="KW-0067">ATP-binding</keyword>
<keyword id="KW-0963">Cytoplasm</keyword>
<keyword id="KW-1015">Disulfide bond</keyword>
<keyword id="KW-0547">Nucleotide-binding</keyword>
<keyword id="KW-1185">Reference proteome</keyword>
<keyword id="KW-0694">RNA-binding</keyword>
<keyword id="KW-0808">Transferase</keyword>
<keyword id="KW-0819">tRNA processing</keyword>
<keyword id="KW-0820">tRNA-binding</keyword>
<feature type="chain" id="PRO_0000121691" description="tRNA-specific 2-thiouridylase MnmA">
    <location>
        <begin position="1"/>
        <end position="369"/>
    </location>
</feature>
<feature type="region of interest" description="Interaction with tRNA" evidence="1">
    <location>
        <begin position="146"/>
        <end position="148"/>
    </location>
</feature>
<feature type="region of interest" description="Interaction with tRNA" evidence="1">
    <location>
        <begin position="301"/>
        <end position="302"/>
    </location>
</feature>
<feature type="active site" description="Nucleophile" evidence="1">
    <location>
        <position position="97"/>
    </location>
</feature>
<feature type="active site" description="Cysteine persulfide intermediate" evidence="1">
    <location>
        <position position="196"/>
    </location>
</feature>
<feature type="binding site" evidence="1">
    <location>
        <begin position="10"/>
        <end position="17"/>
    </location>
    <ligand>
        <name>ATP</name>
        <dbReference type="ChEBI" id="CHEBI:30616"/>
    </ligand>
</feature>
<feature type="binding site" evidence="1">
    <location>
        <position position="36"/>
    </location>
    <ligand>
        <name>ATP</name>
        <dbReference type="ChEBI" id="CHEBI:30616"/>
    </ligand>
</feature>
<feature type="binding site" evidence="1">
    <location>
        <position position="122"/>
    </location>
    <ligand>
        <name>ATP</name>
        <dbReference type="ChEBI" id="CHEBI:30616"/>
    </ligand>
</feature>
<feature type="site" description="Interaction with tRNA" evidence="1">
    <location>
        <position position="123"/>
    </location>
</feature>
<feature type="site" description="Interaction with tRNA" evidence="1">
    <location>
        <position position="335"/>
    </location>
</feature>
<feature type="disulfide bond" description="Alternate" evidence="1">
    <location>
        <begin position="97"/>
        <end position="196"/>
    </location>
</feature>
<accession>Q8CWM0</accession>
<comment type="function">
    <text evidence="1">Catalyzes the 2-thiolation of uridine at the wobble position (U34) of tRNA, leading to the formation of s(2)U34.</text>
</comment>
<comment type="catalytic activity">
    <reaction evidence="1">
        <text>S-sulfanyl-L-cysteinyl-[protein] + uridine(34) in tRNA + AH2 + ATP = 2-thiouridine(34) in tRNA + L-cysteinyl-[protein] + A + AMP + diphosphate + H(+)</text>
        <dbReference type="Rhea" id="RHEA:47032"/>
        <dbReference type="Rhea" id="RHEA-COMP:10131"/>
        <dbReference type="Rhea" id="RHEA-COMP:11726"/>
        <dbReference type="Rhea" id="RHEA-COMP:11727"/>
        <dbReference type="Rhea" id="RHEA-COMP:11728"/>
        <dbReference type="ChEBI" id="CHEBI:13193"/>
        <dbReference type="ChEBI" id="CHEBI:15378"/>
        <dbReference type="ChEBI" id="CHEBI:17499"/>
        <dbReference type="ChEBI" id="CHEBI:29950"/>
        <dbReference type="ChEBI" id="CHEBI:30616"/>
        <dbReference type="ChEBI" id="CHEBI:33019"/>
        <dbReference type="ChEBI" id="CHEBI:61963"/>
        <dbReference type="ChEBI" id="CHEBI:65315"/>
        <dbReference type="ChEBI" id="CHEBI:87170"/>
        <dbReference type="ChEBI" id="CHEBI:456215"/>
        <dbReference type="EC" id="2.8.1.13"/>
    </reaction>
</comment>
<comment type="subcellular location">
    <subcellularLocation>
        <location evidence="1">Cytoplasm</location>
    </subcellularLocation>
</comment>
<comment type="similarity">
    <text evidence="1">Belongs to the MnmA/TRMU family.</text>
</comment>
<reference key="1">
    <citation type="journal article" date="2002" name="DNA Res.">
        <title>Complete genome structure of the thermophilic cyanobacterium Thermosynechococcus elongatus BP-1.</title>
        <authorList>
            <person name="Nakamura Y."/>
            <person name="Kaneko T."/>
            <person name="Sato S."/>
            <person name="Ikeuchi M."/>
            <person name="Katoh H."/>
            <person name="Sasamoto S."/>
            <person name="Watanabe A."/>
            <person name="Iriguchi M."/>
            <person name="Kawashima K."/>
            <person name="Kimura T."/>
            <person name="Kishida Y."/>
            <person name="Kiyokawa C."/>
            <person name="Kohara M."/>
            <person name="Matsumoto M."/>
            <person name="Matsuno A."/>
            <person name="Nakazaki N."/>
            <person name="Shimpo S."/>
            <person name="Sugimoto M."/>
            <person name="Takeuchi C."/>
            <person name="Yamada M."/>
            <person name="Tabata S."/>
        </authorList>
    </citation>
    <scope>NUCLEOTIDE SEQUENCE [LARGE SCALE GENOMIC DNA]</scope>
    <source>
        <strain>NIES-2133 / IAM M-273 / BP-1</strain>
    </source>
</reference>
<organism>
    <name type="scientific">Thermosynechococcus vestitus (strain NIES-2133 / IAM M-273 / BP-1)</name>
    <dbReference type="NCBI Taxonomy" id="197221"/>
    <lineage>
        <taxon>Bacteria</taxon>
        <taxon>Bacillati</taxon>
        <taxon>Cyanobacteriota</taxon>
        <taxon>Cyanophyceae</taxon>
        <taxon>Acaryochloridales</taxon>
        <taxon>Thermosynechococcaceae</taxon>
        <taxon>Thermosynechococcus</taxon>
    </lineage>
</organism>
<sequence length="369" mass="40556">MSDLPAVVVGLSGGVDSSVAIASLKAQGHPVVGLTLWLMKGKGQCCSEGLVDAARLCEQLGVPHHIVDSREIFEKYIVNYLISGYANGVTPLPCSQCNRLVKFGPMLAYSREQLGIDYIATGHYAQVKYNPTSDRYELWRAVDRHKDQSYFLYDLPQEILAHVLFPLGQQTKAETRALAAQYGLPTASKPESQDLCLIEAHGSMRQFLDQYLPRQQGEIVDVYGRVLGYHQGIHHYTIGQRKGLGIAAPEPLYVVALDREHNRVIVGDRATAGRRECTVARVNWVSIPPPKEPMTATVQIRYRTPPVPVTIIPDANAEQVQLEFAEPQFGVTPGQAAVWYAGDRLLGGGIIQPFGTPTLHPLEATATHV</sequence>
<gene>
    <name evidence="1" type="primary">mnmA</name>
    <name type="synonym">trmU</name>
    <name type="ordered locus">tlr2256</name>
</gene>
<evidence type="ECO:0000255" key="1">
    <source>
        <dbReference type="HAMAP-Rule" id="MF_00144"/>
    </source>
</evidence>
<dbReference type="EC" id="2.8.1.13" evidence="1"/>
<dbReference type="EMBL" id="BA000039">
    <property type="protein sequence ID" value="BAC09808.1"/>
    <property type="molecule type" value="Genomic_DNA"/>
</dbReference>
<dbReference type="RefSeq" id="NP_683046.1">
    <property type="nucleotide sequence ID" value="NC_004113.1"/>
</dbReference>
<dbReference type="RefSeq" id="WP_011058089.1">
    <property type="nucleotide sequence ID" value="NC_004113.1"/>
</dbReference>
<dbReference type="SMR" id="Q8CWM0"/>
<dbReference type="STRING" id="197221.gene:10748872"/>
<dbReference type="EnsemblBacteria" id="BAC09808">
    <property type="protein sequence ID" value="BAC09808"/>
    <property type="gene ID" value="BAC09808"/>
</dbReference>
<dbReference type="KEGG" id="tel:tlr2256"/>
<dbReference type="PATRIC" id="fig|197221.4.peg.2365"/>
<dbReference type="eggNOG" id="COG0482">
    <property type="taxonomic scope" value="Bacteria"/>
</dbReference>
<dbReference type="Proteomes" id="UP000000440">
    <property type="component" value="Chromosome"/>
</dbReference>
<dbReference type="GO" id="GO:0005737">
    <property type="term" value="C:cytoplasm"/>
    <property type="evidence" value="ECO:0007669"/>
    <property type="project" value="UniProtKB-SubCell"/>
</dbReference>
<dbReference type="GO" id="GO:0005524">
    <property type="term" value="F:ATP binding"/>
    <property type="evidence" value="ECO:0007669"/>
    <property type="project" value="UniProtKB-KW"/>
</dbReference>
<dbReference type="GO" id="GO:0000049">
    <property type="term" value="F:tRNA binding"/>
    <property type="evidence" value="ECO:0007669"/>
    <property type="project" value="UniProtKB-KW"/>
</dbReference>
<dbReference type="GO" id="GO:0103016">
    <property type="term" value="F:tRNA-uridine 2-sulfurtransferase activity"/>
    <property type="evidence" value="ECO:0007669"/>
    <property type="project" value="UniProtKB-EC"/>
</dbReference>
<dbReference type="GO" id="GO:0002143">
    <property type="term" value="P:tRNA wobble position uridine thiolation"/>
    <property type="evidence" value="ECO:0007669"/>
    <property type="project" value="TreeGrafter"/>
</dbReference>
<dbReference type="CDD" id="cd01998">
    <property type="entry name" value="MnmA_TRMU-like"/>
    <property type="match status" value="1"/>
</dbReference>
<dbReference type="FunFam" id="2.30.30.280:FF:000001">
    <property type="entry name" value="tRNA-specific 2-thiouridylase MnmA"/>
    <property type="match status" value="1"/>
</dbReference>
<dbReference type="FunFam" id="2.40.30.10:FF:000023">
    <property type="entry name" value="tRNA-specific 2-thiouridylase MnmA"/>
    <property type="match status" value="1"/>
</dbReference>
<dbReference type="FunFam" id="3.40.50.620:FF:000302">
    <property type="entry name" value="tRNA-specific 2-thiouridylase MnmA"/>
    <property type="match status" value="1"/>
</dbReference>
<dbReference type="Gene3D" id="2.30.30.280">
    <property type="entry name" value="Adenine nucleotide alpha hydrolases-like domains"/>
    <property type="match status" value="1"/>
</dbReference>
<dbReference type="Gene3D" id="3.40.50.620">
    <property type="entry name" value="HUPs"/>
    <property type="match status" value="1"/>
</dbReference>
<dbReference type="Gene3D" id="2.40.30.10">
    <property type="entry name" value="Translation factors"/>
    <property type="match status" value="1"/>
</dbReference>
<dbReference type="HAMAP" id="MF_00144">
    <property type="entry name" value="tRNA_thiouridyl_MnmA"/>
    <property type="match status" value="1"/>
</dbReference>
<dbReference type="InterPro" id="IPR004506">
    <property type="entry name" value="MnmA-like"/>
</dbReference>
<dbReference type="InterPro" id="IPR046885">
    <property type="entry name" value="MnmA-like_C"/>
</dbReference>
<dbReference type="InterPro" id="IPR046884">
    <property type="entry name" value="MnmA-like_central"/>
</dbReference>
<dbReference type="InterPro" id="IPR023382">
    <property type="entry name" value="MnmA-like_central_sf"/>
</dbReference>
<dbReference type="InterPro" id="IPR014729">
    <property type="entry name" value="Rossmann-like_a/b/a_fold"/>
</dbReference>
<dbReference type="NCBIfam" id="NF001138">
    <property type="entry name" value="PRK00143.1"/>
    <property type="match status" value="1"/>
</dbReference>
<dbReference type="NCBIfam" id="TIGR00420">
    <property type="entry name" value="trmU"/>
    <property type="match status" value="1"/>
</dbReference>
<dbReference type="PANTHER" id="PTHR11933:SF5">
    <property type="entry name" value="MITOCHONDRIAL TRNA-SPECIFIC 2-THIOURIDYLASE 1"/>
    <property type="match status" value="1"/>
</dbReference>
<dbReference type="PANTHER" id="PTHR11933">
    <property type="entry name" value="TRNA 5-METHYLAMINOMETHYL-2-THIOURIDYLATE -METHYLTRANSFERASE"/>
    <property type="match status" value="1"/>
</dbReference>
<dbReference type="Pfam" id="PF03054">
    <property type="entry name" value="tRNA_Me_trans"/>
    <property type="match status" value="1"/>
</dbReference>
<dbReference type="Pfam" id="PF20258">
    <property type="entry name" value="tRNA_Me_trans_C"/>
    <property type="match status" value="1"/>
</dbReference>
<dbReference type="Pfam" id="PF20259">
    <property type="entry name" value="tRNA_Me_trans_M"/>
    <property type="match status" value="1"/>
</dbReference>
<dbReference type="SUPFAM" id="SSF52402">
    <property type="entry name" value="Adenine nucleotide alpha hydrolases-like"/>
    <property type="match status" value="1"/>
</dbReference>
<protein>
    <recommendedName>
        <fullName evidence="1">tRNA-specific 2-thiouridylase MnmA</fullName>
        <ecNumber evidence="1">2.8.1.13</ecNumber>
    </recommendedName>
</protein>
<name>MNMA_THEVB</name>